<dbReference type="EMBL" id="S53251">
    <property type="protein sequence ID" value="AAM33782.1"/>
    <property type="molecule type" value="Genomic_DNA"/>
</dbReference>
<dbReference type="PIR" id="JQ1890">
    <property type="entry name" value="JQ1890"/>
</dbReference>
<dbReference type="RefSeq" id="NP_632007.1">
    <property type="nucleotide sequence ID" value="NC_003896.1"/>
</dbReference>
<dbReference type="SMR" id="P36283"/>
<dbReference type="GeneID" id="944505"/>
<dbReference type="KEGG" id="vg:944505"/>
<dbReference type="Proteomes" id="UP000008246">
    <property type="component" value="Genome"/>
</dbReference>
<dbReference type="GO" id="GO:0052170">
    <property type="term" value="P:symbiont-mediated suppression of host innate immune response"/>
    <property type="evidence" value="ECO:0007669"/>
    <property type="project" value="UniProtKB-KW"/>
</dbReference>
<dbReference type="InterPro" id="IPR002488">
    <property type="entry name" value="Gemini_C4"/>
</dbReference>
<dbReference type="Pfam" id="PF01492">
    <property type="entry name" value="Gemini_C4"/>
    <property type="match status" value="1"/>
</dbReference>
<protein>
    <recommendedName>
        <fullName>Protein C4</fullName>
    </recommendedName>
    <alternativeName>
        <fullName>10.9 kDa protein</fullName>
    </alternativeName>
    <alternativeName>
        <fullName>Protein L4</fullName>
    </alternativeName>
</protein>
<evidence type="ECO:0000256" key="1">
    <source>
        <dbReference type="SAM" id="MobiDB-lite"/>
    </source>
</evidence>
<evidence type="ECO:0000269" key="2">
    <source>
    </source>
</evidence>
<evidence type="ECO:0000305" key="3"/>
<gene>
    <name type="ORF">C4</name>
    <name type="ORF">L4</name>
</gene>
<sequence>MRMGSLISTCLSSSKASSSARINDSSTWSPPPGQHISIRTFRELRARQTSSPIWRRTETPSNGESFRSMDDLQEGDNNQPMTLTPRRLTLEVSQRLLTSLGN</sequence>
<reference key="1">
    <citation type="journal article" date="1993" name="J. Gen. Virol.">
        <title>Nucleotide sequence and genome organization of tomato leaf curl geminivirus.</title>
        <authorList>
            <person name="Dry I.B."/>
            <person name="Rigden J.E."/>
            <person name="Krake L.R."/>
            <person name="Mullineaux P.M."/>
            <person name="Rezaian M.A."/>
        </authorList>
    </citation>
    <scope>NUCLEOTIDE SEQUENCE [GENOMIC DNA]</scope>
</reference>
<reference key="2">
    <citation type="journal article" date="1994" name="Virology">
        <title>ORF C4 of tomato leaf curl geminivirus is a determinant of symptom severity.</title>
        <authorList>
            <person name="Rigden J.E."/>
            <person name="Krake L.R."/>
            <person name="Rezaian M.A."/>
            <person name="Dry I.B."/>
        </authorList>
    </citation>
    <scope>FUNCTION</scope>
</reference>
<organismHost>
    <name type="scientific">Cynanchum acutum</name>
    <dbReference type="NCBI Taxonomy" id="185024"/>
</organismHost>
<organismHost>
    <name type="scientific">Malva parviflora</name>
    <name type="common">Little mallow</name>
    <name type="synonym">Cheeseweed mallow</name>
    <dbReference type="NCBI Taxonomy" id="145753"/>
</organismHost>
<organismHost>
    <name type="scientific">Solanum lycopersicum</name>
    <name type="common">Tomato</name>
    <name type="synonym">Lycopersicon esculentum</name>
    <dbReference type="NCBI Taxonomy" id="4081"/>
</organismHost>
<accession>P36283</accession>
<feature type="chain" id="PRO_0000222296" description="Protein C4">
    <location>
        <begin position="1"/>
        <end position="102"/>
    </location>
</feature>
<feature type="region of interest" description="Disordered" evidence="1">
    <location>
        <begin position="1"/>
        <end position="35"/>
    </location>
</feature>
<feature type="region of interest" description="Disordered" evidence="1">
    <location>
        <begin position="47"/>
        <end position="86"/>
    </location>
</feature>
<feature type="compositionally biased region" description="Low complexity" evidence="1">
    <location>
        <begin position="1"/>
        <end position="27"/>
    </location>
</feature>
<organism>
    <name type="scientific">Tomato leaf curl virus (strain Australia)</name>
    <name type="common">ToLCV</name>
    <dbReference type="NCBI Taxonomy" id="223353"/>
    <lineage>
        <taxon>Viruses</taxon>
        <taxon>Monodnaviria</taxon>
        <taxon>Shotokuvirae</taxon>
        <taxon>Cressdnaviricota</taxon>
        <taxon>Repensiviricetes</taxon>
        <taxon>Geplafuvirales</taxon>
        <taxon>Geminiviridae</taxon>
        <taxon>Begomovirus</taxon>
        <taxon>Tomato leaf curl virus</taxon>
    </lineage>
</organism>
<keyword id="KW-0945">Host-virus interaction</keyword>
<keyword id="KW-1090">Inhibition of host innate immune response by virus</keyword>
<keyword id="KW-1185">Reference proteome</keyword>
<keyword id="KW-0941">Suppressor of RNA silencing</keyword>
<keyword id="KW-0899">Viral immunoevasion</keyword>
<name>AC4_TLCVA</name>
<comment type="function">
    <text evidence="2">Pathogenicity determinant. May act as a suppressor of RNA-mediated gene silencing, also known as post-transcriptional gene silencing (PTGS), a mechanism of plant viral defense that limits the accumulation of viral RNAs.</text>
</comment>
<comment type="similarity">
    <text evidence="3">Belongs to the geminiviridae protein AC4/C4 family.</text>
</comment>
<proteinExistence type="inferred from homology"/>